<proteinExistence type="evidence at transcript level"/>
<gene>
    <name type="primary">Prmt7</name>
</gene>
<accession>Q5U4E8</accession>
<organism>
    <name type="scientific">Rattus norvegicus</name>
    <name type="common">Rat</name>
    <dbReference type="NCBI Taxonomy" id="10116"/>
    <lineage>
        <taxon>Eukaryota</taxon>
        <taxon>Metazoa</taxon>
        <taxon>Chordata</taxon>
        <taxon>Craniata</taxon>
        <taxon>Vertebrata</taxon>
        <taxon>Euteleostomi</taxon>
        <taxon>Mammalia</taxon>
        <taxon>Eutheria</taxon>
        <taxon>Euarchontoglires</taxon>
        <taxon>Glires</taxon>
        <taxon>Rodentia</taxon>
        <taxon>Myomorpha</taxon>
        <taxon>Muroidea</taxon>
        <taxon>Muridae</taxon>
        <taxon>Murinae</taxon>
        <taxon>Rattus</taxon>
    </lineage>
</organism>
<comment type="function">
    <text evidence="3">Arginine methyltransferase that can both catalyze the formation of omega-N monomethylarginine (MMA) and symmetrical dimethylarginine (sDMA), with a preference for the formation of MMA. Specifically mediates the symmetrical dimethylation of arginine residues in the small nuclear ribonucleoproteins Sm D1 (SNRPD1) and Sm D3 (SNRPD3); such methylation being required for the assembly and biogenesis of snRNP core particles. Specifically mediates the symmetric dimethylation of histone H4 'Arg-3' to form H4R3me2s. Plays a role in gene imprinting by being recruited by CTCFL at the H19 imprinted control region (ICR) and methylating histone H4 to form H4R3me2s, possibly leading to recruit DNA methyltransferases at these sites. May also play a role in embryonic stem cell (ESC) pluripotency. Also able to mediate the arginine methylation of histone H2A and myelin basic protein (MBP) in vitro; the relevance of such results is however unclear in vivo.</text>
</comment>
<comment type="catalytic activity">
    <reaction evidence="3">
        <text>L-arginyl-[protein] + S-adenosyl-L-methionine = N(omega)-methyl-L-arginyl-[protein] + S-adenosyl-L-homocysteine + H(+)</text>
        <dbReference type="Rhea" id="RHEA:48100"/>
        <dbReference type="Rhea" id="RHEA-COMP:10532"/>
        <dbReference type="Rhea" id="RHEA-COMP:11990"/>
        <dbReference type="ChEBI" id="CHEBI:15378"/>
        <dbReference type="ChEBI" id="CHEBI:29965"/>
        <dbReference type="ChEBI" id="CHEBI:57856"/>
        <dbReference type="ChEBI" id="CHEBI:59789"/>
        <dbReference type="ChEBI" id="CHEBI:65280"/>
        <dbReference type="EC" id="2.1.1.321"/>
    </reaction>
</comment>
<comment type="subunit">
    <text evidence="1">Homodimer and heterodimer. Interacts with CTCFL, PRMT5 and SNRPD3 (By similarity).</text>
</comment>
<comment type="subcellular location">
    <subcellularLocation>
        <location evidence="1">Cytoplasm</location>
        <location evidence="1">Cytosol</location>
    </subcellularLocation>
    <subcellularLocation>
        <location evidence="1">Nucleus</location>
    </subcellularLocation>
</comment>
<comment type="similarity">
    <text evidence="4">Belongs to the class I-like SAM-binding methyltransferase superfamily. Protein arginine N-methyltransferase family. PRMT7 subfamily.</text>
</comment>
<evidence type="ECO:0000250" key="1"/>
<evidence type="ECO:0000250" key="2">
    <source>
        <dbReference type="UniProtKB" id="Q922X9"/>
    </source>
</evidence>
<evidence type="ECO:0000250" key="3">
    <source>
        <dbReference type="UniProtKB" id="Q9NVM4"/>
    </source>
</evidence>
<evidence type="ECO:0000255" key="4">
    <source>
        <dbReference type="PROSITE-ProRule" id="PRU01015"/>
    </source>
</evidence>
<name>ANM7_RAT</name>
<dbReference type="EC" id="2.1.1.321" evidence="3"/>
<dbReference type="EMBL" id="CH473972">
    <property type="protein sequence ID" value="EDL92443.1"/>
    <property type="molecule type" value="Genomic_DNA"/>
</dbReference>
<dbReference type="EMBL" id="BC085121">
    <property type="protein sequence ID" value="AAH85121.1"/>
    <property type="molecule type" value="mRNA"/>
</dbReference>
<dbReference type="RefSeq" id="NP_001014175.1">
    <property type="nucleotide sequence ID" value="NM_001014153.1"/>
</dbReference>
<dbReference type="SMR" id="Q5U4E8"/>
<dbReference type="FunCoup" id="Q5U4E8">
    <property type="interactions" value="4129"/>
</dbReference>
<dbReference type="STRING" id="10116.ENSRNOP00000075738"/>
<dbReference type="GlyGen" id="Q5U4E8">
    <property type="glycosylation" value="1 site"/>
</dbReference>
<dbReference type="PhosphoSitePlus" id="Q5U4E8"/>
<dbReference type="PaxDb" id="10116-ENSRNOP00000000275"/>
<dbReference type="Ensembl" id="ENSRNOT00000109438.1">
    <property type="protein sequence ID" value="ENSRNOP00000089074.1"/>
    <property type="gene ID" value="ENSRNOG00000000258.7"/>
</dbReference>
<dbReference type="GeneID" id="361402"/>
<dbReference type="KEGG" id="rno:361402"/>
<dbReference type="UCSC" id="RGD:1304869">
    <property type="organism name" value="rat"/>
</dbReference>
<dbReference type="AGR" id="RGD:1304869"/>
<dbReference type="CTD" id="54496"/>
<dbReference type="RGD" id="1304869">
    <property type="gene designation" value="Prmt7"/>
</dbReference>
<dbReference type="eggNOG" id="KOG1501">
    <property type="taxonomic scope" value="Eukaryota"/>
</dbReference>
<dbReference type="GeneTree" id="ENSGT00940000156879"/>
<dbReference type="HOGENOM" id="CLU_015180_0_0_1"/>
<dbReference type="InParanoid" id="Q5U4E8"/>
<dbReference type="OrthoDB" id="4765at9989"/>
<dbReference type="PhylomeDB" id="Q5U4E8"/>
<dbReference type="TreeFam" id="TF315221"/>
<dbReference type="Reactome" id="R-RNO-3214858">
    <property type="pathway name" value="RMTs methylate histone arginines"/>
</dbReference>
<dbReference type="PRO" id="PR:Q5U4E8"/>
<dbReference type="Proteomes" id="UP000002494">
    <property type="component" value="Chromosome 19"/>
</dbReference>
<dbReference type="Proteomes" id="UP000234681">
    <property type="component" value="Chromosome 19"/>
</dbReference>
<dbReference type="Bgee" id="ENSRNOG00000000258">
    <property type="expression patterns" value="Expressed in testis and 18 other cell types or tissues"/>
</dbReference>
<dbReference type="GO" id="GO:0005829">
    <property type="term" value="C:cytosol"/>
    <property type="evidence" value="ECO:0000250"/>
    <property type="project" value="UniProtKB"/>
</dbReference>
<dbReference type="GO" id="GO:0001650">
    <property type="term" value="C:fibrillar center"/>
    <property type="evidence" value="ECO:0007669"/>
    <property type="project" value="Ensembl"/>
</dbReference>
<dbReference type="GO" id="GO:0005654">
    <property type="term" value="C:nucleoplasm"/>
    <property type="evidence" value="ECO:0007669"/>
    <property type="project" value="Ensembl"/>
</dbReference>
<dbReference type="GO" id="GO:0005634">
    <property type="term" value="C:nucleus"/>
    <property type="evidence" value="ECO:0000250"/>
    <property type="project" value="UniProtKB"/>
</dbReference>
<dbReference type="GO" id="GO:0042393">
    <property type="term" value="F:histone binding"/>
    <property type="evidence" value="ECO:0000266"/>
    <property type="project" value="RGD"/>
</dbReference>
<dbReference type="GO" id="GO:0140939">
    <property type="term" value="F:histone H4 methyltransferase activity"/>
    <property type="evidence" value="ECO:0000266"/>
    <property type="project" value="RGD"/>
</dbReference>
<dbReference type="GO" id="GO:0044020">
    <property type="term" value="F:histone H4R3 methyltransferase activity"/>
    <property type="evidence" value="ECO:0000250"/>
    <property type="project" value="UniProtKB"/>
</dbReference>
<dbReference type="GO" id="GO:0042054">
    <property type="term" value="F:histone methyltransferase activity"/>
    <property type="evidence" value="ECO:0000318"/>
    <property type="project" value="GO_Central"/>
</dbReference>
<dbReference type="GO" id="GO:0016274">
    <property type="term" value="F:protein-arginine N-methyltransferase activity"/>
    <property type="evidence" value="ECO:0000318"/>
    <property type="project" value="GO_Central"/>
</dbReference>
<dbReference type="GO" id="GO:0035241">
    <property type="term" value="F:protein-arginine omega-N monomethyltransferase activity"/>
    <property type="evidence" value="ECO:0000266"/>
    <property type="project" value="RGD"/>
</dbReference>
<dbReference type="GO" id="GO:0035243">
    <property type="term" value="F:protein-arginine omega-N symmetric methyltransferase activity"/>
    <property type="evidence" value="ECO:0000250"/>
    <property type="project" value="UniProtKB"/>
</dbReference>
<dbReference type="GO" id="GO:0043021">
    <property type="term" value="F:ribonucleoprotein complex binding"/>
    <property type="evidence" value="ECO:0000266"/>
    <property type="project" value="RGD"/>
</dbReference>
<dbReference type="GO" id="GO:0008757">
    <property type="term" value="F:S-adenosylmethionine-dependent methyltransferase activity"/>
    <property type="evidence" value="ECO:0000266"/>
    <property type="project" value="RGD"/>
</dbReference>
<dbReference type="GO" id="GO:0006338">
    <property type="term" value="P:chromatin remodeling"/>
    <property type="evidence" value="ECO:0000318"/>
    <property type="project" value="GO_Central"/>
</dbReference>
<dbReference type="GO" id="GO:0071514">
    <property type="term" value="P:genomic imprinting"/>
    <property type="evidence" value="ECO:0000250"/>
    <property type="project" value="UniProtKB"/>
</dbReference>
<dbReference type="GO" id="GO:0018216">
    <property type="term" value="P:peptidyl-arginine methylation"/>
    <property type="evidence" value="ECO:0000250"/>
    <property type="project" value="UniProtKB"/>
</dbReference>
<dbReference type="GO" id="GO:0006355">
    <property type="term" value="P:regulation of DNA-templated transcription"/>
    <property type="evidence" value="ECO:0000318"/>
    <property type="project" value="GO_Central"/>
</dbReference>
<dbReference type="GO" id="GO:0000387">
    <property type="term" value="P:spliceosomal snRNP assembly"/>
    <property type="evidence" value="ECO:0000250"/>
    <property type="project" value="UniProtKB"/>
</dbReference>
<dbReference type="CDD" id="cd02440">
    <property type="entry name" value="AdoMet_MTases"/>
    <property type="match status" value="1"/>
</dbReference>
<dbReference type="FunFam" id="2.70.160.11:FF:000010">
    <property type="entry name" value="Protein arginine N-methyltransferase"/>
    <property type="match status" value="1"/>
</dbReference>
<dbReference type="FunFam" id="2.70.160.11:FF:000004">
    <property type="entry name" value="Protein arginine N-methyltransferase 7"/>
    <property type="match status" value="1"/>
</dbReference>
<dbReference type="FunFam" id="3.40.50.150:FF:000070">
    <property type="entry name" value="Protein arginine N-methyltransferase 7"/>
    <property type="match status" value="1"/>
</dbReference>
<dbReference type="FunFam" id="3.40.50.150:FF:000071">
    <property type="entry name" value="Protein arginine N-methyltransferase 7"/>
    <property type="match status" value="1"/>
</dbReference>
<dbReference type="Gene3D" id="2.70.160.11">
    <property type="entry name" value="Hnrnp arginine n-methyltransferase1"/>
    <property type="match status" value="2"/>
</dbReference>
<dbReference type="Gene3D" id="3.40.50.150">
    <property type="entry name" value="Vaccinia Virus protein VP39"/>
    <property type="match status" value="2"/>
</dbReference>
<dbReference type="InterPro" id="IPR025799">
    <property type="entry name" value="Arg_MeTrfase"/>
</dbReference>
<dbReference type="InterPro" id="IPR014644">
    <property type="entry name" value="MeTrfase_PRMT7"/>
</dbReference>
<dbReference type="InterPro" id="IPR055135">
    <property type="entry name" value="PRMT_dom"/>
</dbReference>
<dbReference type="InterPro" id="IPR029063">
    <property type="entry name" value="SAM-dependent_MTases_sf"/>
</dbReference>
<dbReference type="PANTHER" id="PTHR11006">
    <property type="entry name" value="PROTEIN ARGININE N-METHYLTRANSFERASE"/>
    <property type="match status" value="1"/>
</dbReference>
<dbReference type="PANTHER" id="PTHR11006:SF4">
    <property type="entry name" value="PROTEIN ARGININE N-METHYLTRANSFERASE 7"/>
    <property type="match status" value="1"/>
</dbReference>
<dbReference type="Pfam" id="PF06325">
    <property type="entry name" value="PrmA"/>
    <property type="match status" value="1"/>
</dbReference>
<dbReference type="Pfam" id="PF22528">
    <property type="entry name" value="PRMT_C"/>
    <property type="match status" value="2"/>
</dbReference>
<dbReference type="PIRSF" id="PIRSF036946">
    <property type="entry name" value="Arg_N-mtase"/>
    <property type="match status" value="1"/>
</dbReference>
<dbReference type="SUPFAM" id="SSF53335">
    <property type="entry name" value="S-adenosyl-L-methionine-dependent methyltransferases"/>
    <property type="match status" value="2"/>
</dbReference>
<dbReference type="PROSITE" id="PS51678">
    <property type="entry name" value="SAM_MT_PRMT"/>
    <property type="match status" value="2"/>
</dbReference>
<feature type="chain" id="PRO_0000373902" description="Protein arginine N-methyltransferase 7">
    <location>
        <begin position="1"/>
        <end position="693"/>
    </location>
</feature>
<feature type="domain" description="SAM-dependent MTase PRMT-type 1" evidence="4">
    <location>
        <begin position="14"/>
        <end position="345"/>
    </location>
</feature>
<feature type="domain" description="SAM-dependent MTase PRMT-type 2" evidence="4">
    <location>
        <begin position="358"/>
        <end position="684"/>
    </location>
</feature>
<feature type="active site" evidence="1">
    <location>
        <position position="144"/>
    </location>
</feature>
<feature type="active site" evidence="1">
    <location>
        <position position="153"/>
    </location>
</feature>
<feature type="modified residue" description="Omega-N-methylarginine" evidence="2">
    <location>
        <position position="32"/>
    </location>
</feature>
<protein>
    <recommendedName>
        <fullName>Protein arginine N-methyltransferase 7</fullName>
        <ecNumber evidence="3">2.1.1.321</ecNumber>
    </recommendedName>
    <alternativeName>
        <fullName>Histone-arginine N-methyltransferase PRMT7</fullName>
    </alternativeName>
    <alternativeName>
        <fullName>[Myelin basic protein]-arginine N-methyltransferase PRMT7</fullName>
    </alternativeName>
</protein>
<reference key="1">
    <citation type="submission" date="2005-07" db="EMBL/GenBank/DDBJ databases">
        <authorList>
            <person name="Mural R.J."/>
            <person name="Adams M.D."/>
            <person name="Myers E.W."/>
            <person name="Smith H.O."/>
            <person name="Venter J.C."/>
        </authorList>
    </citation>
    <scope>NUCLEOTIDE SEQUENCE [LARGE SCALE GENOMIC DNA]</scope>
</reference>
<reference key="2">
    <citation type="journal article" date="2004" name="Genome Res.">
        <title>The status, quality, and expansion of the NIH full-length cDNA project: the Mammalian Gene Collection (MGC).</title>
        <authorList>
            <consortium name="The MGC Project Team"/>
        </authorList>
    </citation>
    <scope>NUCLEOTIDE SEQUENCE [LARGE SCALE MRNA]</scope>
    <source>
        <tissue>Testis</tissue>
    </source>
</reference>
<sequence length="693" mass="78346">MKVFCGRANPTTGSLEWLEEDEHYDYHQEIARSSYADMLHDKDRNIKYYQGIRAAVSRVKDKGQKALVLDIGTGTGLLSMMAVTAGADFCYAVEVFKPMAEAAVKIVEKNGFSDKIKVINKHSTEVTVGPDGDLPCRANILVTELFDTELIGEGALPSYEHAHKHLVQEDCEAVPHRATVYAQLVESKRMWSWNKLFPVRVQTGLGEQLIIPPSELERCPGAPSVYDIQLNQVSPADFTVLSDVLPMFSVDFSKQVSSSAACHSKQFVPLASGQAQVVLSWWDIEMDPEGKIKCTMAPFWAQTDPQELQWRDHWMQCVYFLPQEEPIMQGSPRCLAAHHDDYCVWYSLQRTSPDENNSAYQVRPVCDCQAHLLWNRPRFGEINDQDRTDHYARALRTMLMPGSICLCVSDGSLLSVLAHHLGAEQVFTVESSVASYRLMKRIFKVNHLEDKITVINKRPELLTSADLEGKKVSLLLGEPFFTTSLLPWHNLYFWYVRTSVDQHLAPGAVVMPQAASLHAVIVEFRDLWRIRSPCGDCEGFDVHIMDDMIKHSLDFRESREAEPQPLWEYPCRSLSEPRQILTFDFQQPIPQQPMQSRGVMELRRPGKSHGAVLWMEYQLTPDSTVSTGLMNPAEDKGDCCWNPHCKQAVYFLSATLDPSAPLDGPQSVSYAVEFHPLTGDITMEFRLADDTLN</sequence>
<keyword id="KW-0156">Chromatin regulator</keyword>
<keyword id="KW-0963">Cytoplasm</keyword>
<keyword id="KW-0221">Differentiation</keyword>
<keyword id="KW-0488">Methylation</keyword>
<keyword id="KW-0489">Methyltransferase</keyword>
<keyword id="KW-0539">Nucleus</keyword>
<keyword id="KW-1185">Reference proteome</keyword>
<keyword id="KW-0677">Repeat</keyword>
<keyword id="KW-0949">S-adenosyl-L-methionine</keyword>
<keyword id="KW-0804">Transcription</keyword>
<keyword id="KW-0805">Transcription regulation</keyword>
<keyword id="KW-0808">Transferase</keyword>